<name>EDD_HELPJ</name>
<sequence length="608" mass="66603">MPKHSLEQIKEKITERSKKTRELYLENTFNPKNQPKIESLGCANIAHVTASMPEHLKMPLGSHKRKHFAIITAYNDMLSAHQPFKNYPDLIKKELQEHNAYASVASGVPAMCDGITQGYEGMELSLFSRDVIALSTAVGLSHNVFDGAFFLGVCDKIVPGLLIGALSFGNLASVFVPSGPMVSGIENYKKAKARQDFAMGKINREELLKVEMQSYHDVGTCTFYGTANSNQMMMEFMGLHVANSSFINPNNPLRKVLVEESAKRLASGKVLPLAKLIDEKSILNALIGLMATGGSTNHTLHLIAIARSCGVILNWDDFDAISNLIPLLAKVYPNGSADVNAFEACGGLAFVIKELLKEGLLFEDTHTIMDTETQKGMQNYTKTPFLENDQLVYKDAVSHSLNTDILRPVSEPFAANGGLKILKGNLGRAVIKISAIKDEHRKVKARAIVFKTQSEFLERFKNKELERDFVAVLPFQGPKSNGMPELHKLTTNLGALQDMGYKVALVTDGRMSGASGKVPSAIHLSPEGALNGAIIKIKDGDLIELDAPNNALNVLEKDFEKRGINPLFLETLENLEKPTFGLGRELFTSLRLNANTAEEGGMSFGIKV</sequence>
<comment type="function">
    <text evidence="1">Catalyzes the dehydration of 6-phospho-D-gluconate to 2-dehydro-3-deoxy-6-phospho-D-gluconate.</text>
</comment>
<comment type="catalytic activity">
    <reaction evidence="1">
        <text>6-phospho-D-gluconate = 2-dehydro-3-deoxy-6-phospho-D-gluconate + H2O</text>
        <dbReference type="Rhea" id="RHEA:17277"/>
        <dbReference type="ChEBI" id="CHEBI:15377"/>
        <dbReference type="ChEBI" id="CHEBI:57569"/>
        <dbReference type="ChEBI" id="CHEBI:58759"/>
        <dbReference type="EC" id="4.2.1.12"/>
    </reaction>
</comment>
<comment type="cofactor">
    <cofactor evidence="1">
        <name>[4Fe-4S] cluster</name>
        <dbReference type="ChEBI" id="CHEBI:49883"/>
    </cofactor>
    <text evidence="1">Binds 1 [4Fe-4S] cluster.</text>
</comment>
<comment type="pathway">
    <text evidence="1">Carbohydrate metabolism; Entner-Doudoroff pathway.</text>
</comment>
<comment type="similarity">
    <text evidence="1 2">Belongs to the IlvD/Edd family.</text>
</comment>
<keyword id="KW-0004">4Fe-4S</keyword>
<keyword id="KW-0119">Carbohydrate metabolism</keyword>
<keyword id="KW-0311">Gluconate utilization</keyword>
<keyword id="KW-0408">Iron</keyword>
<keyword id="KW-0411">Iron-sulfur</keyword>
<keyword id="KW-0456">Lyase</keyword>
<keyword id="KW-0479">Metal-binding</keyword>
<proteinExistence type="inferred from homology"/>
<dbReference type="EC" id="4.2.1.12" evidence="1"/>
<dbReference type="EMBL" id="AE001439">
    <property type="protein sequence ID" value="AAD06597.1"/>
    <property type="molecule type" value="Genomic_DNA"/>
</dbReference>
<dbReference type="PIR" id="E71859">
    <property type="entry name" value="E71859"/>
</dbReference>
<dbReference type="RefSeq" id="WP_001124101.1">
    <property type="nucleotide sequence ID" value="NC_000921.1"/>
</dbReference>
<dbReference type="SMR" id="Q9ZKB3"/>
<dbReference type="KEGG" id="hpj:jhp_1026"/>
<dbReference type="PATRIC" id="fig|85963.30.peg.1565"/>
<dbReference type="eggNOG" id="COG0129">
    <property type="taxonomic scope" value="Bacteria"/>
</dbReference>
<dbReference type="UniPathway" id="UPA00226"/>
<dbReference type="Proteomes" id="UP000000804">
    <property type="component" value="Chromosome"/>
</dbReference>
<dbReference type="GO" id="GO:0005829">
    <property type="term" value="C:cytosol"/>
    <property type="evidence" value="ECO:0007669"/>
    <property type="project" value="TreeGrafter"/>
</dbReference>
<dbReference type="GO" id="GO:0051539">
    <property type="term" value="F:4 iron, 4 sulfur cluster binding"/>
    <property type="evidence" value="ECO:0007669"/>
    <property type="project" value="UniProtKB-UniRule"/>
</dbReference>
<dbReference type="GO" id="GO:0046872">
    <property type="term" value="F:metal ion binding"/>
    <property type="evidence" value="ECO:0007669"/>
    <property type="project" value="UniProtKB-KW"/>
</dbReference>
<dbReference type="GO" id="GO:0004456">
    <property type="term" value="F:phosphogluconate dehydratase activity"/>
    <property type="evidence" value="ECO:0007669"/>
    <property type="project" value="UniProtKB-UniRule"/>
</dbReference>
<dbReference type="GO" id="GO:0019521">
    <property type="term" value="P:D-gluconate metabolic process"/>
    <property type="evidence" value="ECO:0007669"/>
    <property type="project" value="UniProtKB-KW"/>
</dbReference>
<dbReference type="GO" id="GO:0009255">
    <property type="term" value="P:Entner-Doudoroff pathway through 6-phosphogluconate"/>
    <property type="evidence" value="ECO:0007669"/>
    <property type="project" value="UniProtKB-UniRule"/>
</dbReference>
<dbReference type="Gene3D" id="3.50.30.80">
    <property type="entry name" value="IlvD/EDD C-terminal domain-like"/>
    <property type="match status" value="1"/>
</dbReference>
<dbReference type="HAMAP" id="MF_02094">
    <property type="entry name" value="Edd"/>
    <property type="match status" value="1"/>
</dbReference>
<dbReference type="InterPro" id="IPR004786">
    <property type="entry name" value="6-phosphgluc_deHydtase"/>
</dbReference>
<dbReference type="InterPro" id="IPR042096">
    <property type="entry name" value="Dihydro-acid_dehy_C"/>
</dbReference>
<dbReference type="InterPro" id="IPR020558">
    <property type="entry name" value="DiOHA_6PGluconate_deHydtase_CS"/>
</dbReference>
<dbReference type="InterPro" id="IPR056740">
    <property type="entry name" value="ILV_EDD_C"/>
</dbReference>
<dbReference type="InterPro" id="IPR000581">
    <property type="entry name" value="ILV_EDD_N"/>
</dbReference>
<dbReference type="InterPro" id="IPR037237">
    <property type="entry name" value="IlvD/EDD_N"/>
</dbReference>
<dbReference type="NCBIfam" id="TIGR01196">
    <property type="entry name" value="edd"/>
    <property type="match status" value="1"/>
</dbReference>
<dbReference type="PANTHER" id="PTHR43661">
    <property type="entry name" value="D-XYLONATE DEHYDRATASE"/>
    <property type="match status" value="1"/>
</dbReference>
<dbReference type="PANTHER" id="PTHR43661:SF1">
    <property type="entry name" value="PHOSPHOGLUCONATE DEHYDRATASE"/>
    <property type="match status" value="1"/>
</dbReference>
<dbReference type="Pfam" id="PF24877">
    <property type="entry name" value="ILV_EDD_C"/>
    <property type="match status" value="1"/>
</dbReference>
<dbReference type="Pfam" id="PF00920">
    <property type="entry name" value="ILVD_EDD_N"/>
    <property type="match status" value="1"/>
</dbReference>
<dbReference type="SUPFAM" id="SSF143975">
    <property type="entry name" value="IlvD/EDD N-terminal domain-like"/>
    <property type="match status" value="1"/>
</dbReference>
<dbReference type="SUPFAM" id="SSF52016">
    <property type="entry name" value="LeuD/IlvD-like"/>
    <property type="match status" value="1"/>
</dbReference>
<dbReference type="PROSITE" id="PS00886">
    <property type="entry name" value="ILVD_EDD_1"/>
    <property type="match status" value="1"/>
</dbReference>
<dbReference type="PROSITE" id="PS00887">
    <property type="entry name" value="ILVD_EDD_2"/>
    <property type="match status" value="1"/>
</dbReference>
<reference key="1">
    <citation type="journal article" date="1999" name="Nature">
        <title>Genomic sequence comparison of two unrelated isolates of the human gastric pathogen Helicobacter pylori.</title>
        <authorList>
            <person name="Alm R.A."/>
            <person name="Ling L.-S.L."/>
            <person name="Moir D.T."/>
            <person name="King B.L."/>
            <person name="Brown E.D."/>
            <person name="Doig P.C."/>
            <person name="Smith D.R."/>
            <person name="Noonan B."/>
            <person name="Guild B.C."/>
            <person name="deJonge B.L."/>
            <person name="Carmel G."/>
            <person name="Tummino P.J."/>
            <person name="Caruso A."/>
            <person name="Uria-Nickelsen M."/>
            <person name="Mills D.M."/>
            <person name="Ives C."/>
            <person name="Gibson R."/>
            <person name="Merberg D."/>
            <person name="Mills S.D."/>
            <person name="Jiang Q."/>
            <person name="Taylor D.E."/>
            <person name="Vovis G.F."/>
            <person name="Trust T.J."/>
        </authorList>
    </citation>
    <scope>NUCLEOTIDE SEQUENCE [LARGE SCALE GENOMIC DNA]</scope>
    <source>
        <strain>J99 / ATCC 700824</strain>
    </source>
</reference>
<accession>Q9ZKB3</accession>
<gene>
    <name evidence="1" type="primary">edd</name>
    <name type="ordered locus">jhp_1026</name>
</gene>
<organism>
    <name type="scientific">Helicobacter pylori (strain J99 / ATCC 700824)</name>
    <name type="common">Campylobacter pylori J99</name>
    <dbReference type="NCBI Taxonomy" id="85963"/>
    <lineage>
        <taxon>Bacteria</taxon>
        <taxon>Pseudomonadati</taxon>
        <taxon>Campylobacterota</taxon>
        <taxon>Epsilonproteobacteria</taxon>
        <taxon>Campylobacterales</taxon>
        <taxon>Helicobacteraceae</taxon>
        <taxon>Helicobacter</taxon>
    </lineage>
</organism>
<evidence type="ECO:0000255" key="1">
    <source>
        <dbReference type="HAMAP-Rule" id="MF_02094"/>
    </source>
</evidence>
<evidence type="ECO:0000305" key="2"/>
<protein>
    <recommendedName>
        <fullName evidence="1">Phosphogluconate dehydratase</fullName>
        <ecNumber evidence="1">4.2.1.12</ecNumber>
    </recommendedName>
</protein>
<feature type="chain" id="PRO_0000103556" description="Phosphogluconate dehydratase">
    <location>
        <begin position="1"/>
        <end position="608"/>
    </location>
</feature>
<feature type="binding site" evidence="1">
    <location>
        <position position="154"/>
    </location>
    <ligand>
        <name>[4Fe-4S] cluster</name>
        <dbReference type="ChEBI" id="CHEBI:49883"/>
    </ligand>
</feature>
<feature type="binding site" evidence="1">
    <location>
        <position position="221"/>
    </location>
    <ligand>
        <name>[4Fe-4S] cluster</name>
        <dbReference type="ChEBI" id="CHEBI:49883"/>
    </ligand>
</feature>